<sequence>MAANVSGAKSCPANFLAAADDKLSGFQGDFLWPILVVEFLVAVASNGLALYRFSIRKQRPWHPAVVFSVQLAVSDLLCALTLPPLAAYLYPPKHWRYGEAACRLERFLFTCNLLGSVIFITCISLNRYLGIVHPFFARSHLRPKHAWAVSAAGWVLAALLAMPTLSFSHLKRPQQGAGNCSVARPEACIKCLGTADHGLAAYRAYSLVLAGLGCGLPLLLTLAAYGALGRAVLRSPGMTVAEKLRVAALVASGVALYASSYVPYHIMRVLNVDARRRWSTRCPSFADIAQATAALELGPYVGYQVMRGLMPLAFCVHPLLYMAAVPSLGCCCRHCPGYRDSWNPEDAKSTGQALPLNATAAPKPSEPQSRELSQ</sequence>
<feature type="chain" id="PRO_0000070035" description="P2Y purinoceptor 11">
    <location>
        <begin position="1"/>
        <end position="374"/>
    </location>
</feature>
<feature type="topological domain" description="Extracellular" evidence="1">
    <location>
        <begin position="1"/>
        <end position="29"/>
    </location>
</feature>
<feature type="transmembrane region" description="Helical; Name=1" evidence="1">
    <location>
        <begin position="30"/>
        <end position="50"/>
    </location>
</feature>
<feature type="topological domain" description="Cytoplasmic" evidence="1">
    <location>
        <begin position="51"/>
        <end position="64"/>
    </location>
</feature>
<feature type="transmembrane region" description="Helical; Name=2" evidence="1">
    <location>
        <begin position="65"/>
        <end position="85"/>
    </location>
</feature>
<feature type="topological domain" description="Extracellular" evidence="1">
    <location>
        <begin position="86"/>
        <end position="116"/>
    </location>
</feature>
<feature type="transmembrane region" description="Helical; Name=3" evidence="1">
    <location>
        <begin position="117"/>
        <end position="137"/>
    </location>
</feature>
<feature type="topological domain" description="Cytoplasmic" evidence="1">
    <location>
        <begin position="138"/>
        <end position="146"/>
    </location>
</feature>
<feature type="transmembrane region" description="Helical; Name=4" evidence="1">
    <location>
        <begin position="147"/>
        <end position="167"/>
    </location>
</feature>
<feature type="topological domain" description="Extracellular" evidence="1">
    <location>
        <begin position="168"/>
        <end position="206"/>
    </location>
</feature>
<feature type="transmembrane region" description="Helical; Name=5" evidence="1">
    <location>
        <begin position="207"/>
        <end position="227"/>
    </location>
</feature>
<feature type="topological domain" description="Cytoplasmic" evidence="1">
    <location>
        <begin position="228"/>
        <end position="245"/>
    </location>
</feature>
<feature type="transmembrane region" description="Helical; Name=6" evidence="1">
    <location>
        <begin position="246"/>
        <end position="266"/>
    </location>
</feature>
<feature type="topological domain" description="Extracellular" evidence="1">
    <location>
        <begin position="267"/>
        <end position="308"/>
    </location>
</feature>
<feature type="transmembrane region" description="Helical; Name=7" evidence="1">
    <location>
        <begin position="309"/>
        <end position="329"/>
    </location>
</feature>
<feature type="topological domain" description="Cytoplasmic" evidence="1">
    <location>
        <begin position="330"/>
        <end position="374"/>
    </location>
</feature>
<feature type="region of interest" description="Disordered" evidence="3">
    <location>
        <begin position="345"/>
        <end position="374"/>
    </location>
</feature>
<feature type="glycosylation site" description="N-linked (GlcNAc...) asparagine" evidence="1">
    <location>
        <position position="4"/>
    </location>
</feature>
<feature type="glycosylation site" description="N-linked (GlcNAc...) asparagine" evidence="1">
    <location>
        <position position="179"/>
    </location>
</feature>
<feature type="disulfide bond" evidence="2">
    <location>
        <begin position="102"/>
        <end position="180"/>
    </location>
</feature>
<feature type="sequence variant" id="VAR_020074" description="In dbSNP:rs3745601.">
    <original>A</original>
    <variation>T</variation>
    <location>
        <position position="87"/>
    </location>
</feature>
<organism>
    <name type="scientific">Homo sapiens</name>
    <name type="common">Human</name>
    <dbReference type="NCBI Taxonomy" id="9606"/>
    <lineage>
        <taxon>Eukaryota</taxon>
        <taxon>Metazoa</taxon>
        <taxon>Chordata</taxon>
        <taxon>Craniata</taxon>
        <taxon>Vertebrata</taxon>
        <taxon>Euteleostomi</taxon>
        <taxon>Mammalia</taxon>
        <taxon>Eutheria</taxon>
        <taxon>Euarchontoglires</taxon>
        <taxon>Primates</taxon>
        <taxon>Haplorrhini</taxon>
        <taxon>Catarrhini</taxon>
        <taxon>Hominidae</taxon>
        <taxon>Homo</taxon>
    </lineage>
</organism>
<accession>Q96G91</accession>
<accession>B2R8X9</accession>
<accession>O43190</accession>
<accession>Q9BYU4</accession>
<accession>Q9H170</accession>
<comment type="function">
    <text>Receptor for ATP and ADP coupled to G-proteins that activate both phosphatidylinositol-calcium and adenylyl cyclase second messenger systems. Not activated by UTP or UDP.</text>
</comment>
<comment type="subcellular location">
    <subcellularLocation>
        <location>Cell membrane</location>
        <topology>Multi-pass membrane protein</topology>
    </subcellularLocation>
</comment>
<comment type="tissue specificity">
    <text evidence="4">Highest expression in liver and spleen.</text>
</comment>
<comment type="induction">
    <text>Increased by DMSO and retinoic acid.</text>
</comment>
<comment type="miscellaneous">
    <text evidence="6">A chimeric transcript, characterized by the first third of PPAN exon 12 joined to P2RY11 exon 2, has been detected. It is possibly produced by trans-splicing. The chimeric transcript is widely expressed and can be induced by retinoic acid during the granulocytic differentiation of the HL-60 cell line. The resulting chimeric protein shows a much lower activity than the non-chimeric P2RY11 gene product, but qualitatively indistinguishable (PubMed:11278528).</text>
</comment>
<comment type="similarity">
    <text evidence="2">Belongs to the G-protein coupled receptor 1 family.</text>
</comment>
<comment type="sequence caution" evidence="5">
    <conflict type="erroneous initiation">
        <sequence resource="EMBL-CDS" id="AAB88674"/>
    </conflict>
</comment>
<comment type="sequence caution" evidence="5">
    <conflict type="erroneous initiation">
        <sequence resource="EMBL-CDS" id="CAC18877"/>
    </conflict>
</comment>
<evidence type="ECO:0000255" key="1"/>
<evidence type="ECO:0000255" key="2">
    <source>
        <dbReference type="PROSITE-ProRule" id="PRU00521"/>
    </source>
</evidence>
<evidence type="ECO:0000256" key="3">
    <source>
        <dbReference type="SAM" id="MobiDB-lite"/>
    </source>
</evidence>
<evidence type="ECO:0000269" key="4">
    <source>
    </source>
</evidence>
<evidence type="ECO:0000305" key="5"/>
<evidence type="ECO:0000305" key="6">
    <source>
    </source>
</evidence>
<gene>
    <name type="primary">P2RY11</name>
</gene>
<dbReference type="EMBL" id="AF030335">
    <property type="protein sequence ID" value="AAB88674.1"/>
    <property type="status" value="ALT_INIT"/>
    <property type="molecule type" value="mRNA"/>
</dbReference>
<dbReference type="EMBL" id="AJ298334">
    <property type="protein sequence ID" value="CAC29362.1"/>
    <property type="molecule type" value="mRNA"/>
</dbReference>
<dbReference type="EMBL" id="AJ300588">
    <property type="protein sequence ID" value="CAC18877.1"/>
    <property type="status" value="ALT_INIT"/>
    <property type="molecule type" value="mRNA"/>
</dbReference>
<dbReference type="EMBL" id="AY449733">
    <property type="protein sequence ID" value="AAR18077.1"/>
    <property type="molecule type" value="mRNA"/>
</dbReference>
<dbReference type="EMBL" id="AK313550">
    <property type="protein sequence ID" value="BAG36326.1"/>
    <property type="molecule type" value="mRNA"/>
</dbReference>
<dbReference type="EMBL" id="CH471106">
    <property type="protein sequence ID" value="EAW84077.1"/>
    <property type="molecule type" value="Genomic_DNA"/>
</dbReference>
<dbReference type="EMBL" id="BC073827">
    <property type="protein sequence ID" value="AAH73827.1"/>
    <property type="molecule type" value="mRNA"/>
</dbReference>
<dbReference type="EMBL" id="AF498921">
    <property type="protein sequence ID" value="AAM18130.1"/>
    <property type="molecule type" value="mRNA"/>
</dbReference>
<dbReference type="CCDS" id="CCDS12226.1"/>
<dbReference type="RefSeq" id="NP_002557.2">
    <property type="nucleotide sequence ID" value="NM_002566.4"/>
</dbReference>
<dbReference type="SMR" id="Q96G91"/>
<dbReference type="BioGRID" id="111071">
    <property type="interactions" value="6"/>
</dbReference>
<dbReference type="CORUM" id="Q96G91"/>
<dbReference type="FunCoup" id="Q96G91">
    <property type="interactions" value="880"/>
</dbReference>
<dbReference type="IntAct" id="Q96G91">
    <property type="interactions" value="2"/>
</dbReference>
<dbReference type="STRING" id="9606.ENSP00000323872"/>
<dbReference type="BindingDB" id="Q96G91"/>
<dbReference type="ChEMBL" id="CHEMBL4867"/>
<dbReference type="DrugBank" id="DB00171">
    <property type="generic name" value="ATP"/>
</dbReference>
<dbReference type="DrugBank" id="DB03222">
    <property type="generic name" value="dATP"/>
</dbReference>
<dbReference type="DrugBank" id="DB01069">
    <property type="generic name" value="Promethazine"/>
</dbReference>
<dbReference type="DrugBank" id="DB04005">
    <property type="generic name" value="Uridine 5'-triphosphate"/>
</dbReference>
<dbReference type="DrugCentral" id="Q96G91"/>
<dbReference type="GuidetoPHARMACOLOGY" id="327"/>
<dbReference type="GlyCosmos" id="Q96G91">
    <property type="glycosylation" value="2 sites, No reported glycans"/>
</dbReference>
<dbReference type="GlyGen" id="Q96G91">
    <property type="glycosylation" value="2 sites"/>
</dbReference>
<dbReference type="iPTMnet" id="Q96G91"/>
<dbReference type="PhosphoSitePlus" id="Q96G91"/>
<dbReference type="BioMuta" id="P2RY11"/>
<dbReference type="DMDM" id="21263830"/>
<dbReference type="MassIVE" id="Q96G91"/>
<dbReference type="PaxDb" id="9606-ENSP00000323872"/>
<dbReference type="PeptideAtlas" id="Q96G91"/>
<dbReference type="ProteomicsDB" id="76604"/>
<dbReference type="Antibodypedia" id="35031">
    <property type="antibodies" value="250 antibodies from 31 providers"/>
</dbReference>
<dbReference type="DNASU" id="5032"/>
<dbReference type="Ensembl" id="ENST00000321826.5">
    <property type="protein sequence ID" value="ENSP00000323872.4"/>
    <property type="gene ID" value="ENSG00000244165.2"/>
</dbReference>
<dbReference type="GeneID" id="5032"/>
<dbReference type="KEGG" id="hsa:5032"/>
<dbReference type="MANE-Select" id="ENST00000321826.5">
    <property type="protein sequence ID" value="ENSP00000323872.4"/>
    <property type="RefSeq nucleotide sequence ID" value="NM_002566.5"/>
    <property type="RefSeq protein sequence ID" value="NP_002557.2"/>
</dbReference>
<dbReference type="UCSC" id="uc002mnc.4">
    <property type="organism name" value="human"/>
</dbReference>
<dbReference type="AGR" id="HGNC:8540"/>
<dbReference type="CTD" id="5032"/>
<dbReference type="DisGeNET" id="5032"/>
<dbReference type="GeneCards" id="P2RY11"/>
<dbReference type="HGNC" id="HGNC:8540">
    <property type="gene designation" value="P2RY11"/>
</dbReference>
<dbReference type="HPA" id="ENSG00000244165">
    <property type="expression patterns" value="Low tissue specificity"/>
</dbReference>
<dbReference type="MalaCards" id="P2RY11"/>
<dbReference type="MIM" id="602697">
    <property type="type" value="gene"/>
</dbReference>
<dbReference type="neXtProt" id="NX_Q96G91"/>
<dbReference type="OpenTargets" id="ENSG00000244165"/>
<dbReference type="Orphanet" id="2073">
    <property type="disease" value="Narcolepsy type 1"/>
</dbReference>
<dbReference type="PharmGKB" id="PA32869"/>
<dbReference type="VEuPathDB" id="HostDB:ENSG00000244165"/>
<dbReference type="GeneTree" id="ENSGT01030000234518"/>
<dbReference type="HOGENOM" id="CLU_009579_8_2_1"/>
<dbReference type="InParanoid" id="Q96G91"/>
<dbReference type="OMA" id="MYQVSKG"/>
<dbReference type="OrthoDB" id="10261452at2759"/>
<dbReference type="PAN-GO" id="Q96G91">
    <property type="GO annotations" value="5 GO annotations based on evolutionary models"/>
</dbReference>
<dbReference type="PhylomeDB" id="Q96G91"/>
<dbReference type="TreeFam" id="TF330775"/>
<dbReference type="PathwayCommons" id="Q96G91"/>
<dbReference type="Reactome" id="R-HSA-416476">
    <property type="pathway name" value="G alpha (q) signalling events"/>
</dbReference>
<dbReference type="Reactome" id="R-HSA-417957">
    <property type="pathway name" value="P2Y receptors"/>
</dbReference>
<dbReference type="Reactome" id="R-HSA-418555">
    <property type="pathway name" value="G alpha (s) signalling events"/>
</dbReference>
<dbReference type="SignaLink" id="Q96G91"/>
<dbReference type="SIGNOR" id="Q96G91"/>
<dbReference type="BioGRID-ORCS" id="5032">
    <property type="hits" value="17 hits in 1114 CRISPR screens"/>
</dbReference>
<dbReference type="GeneWiki" id="P2RY11"/>
<dbReference type="GenomeRNAi" id="5032"/>
<dbReference type="Pharos" id="Q96G91">
    <property type="development level" value="Tchem"/>
</dbReference>
<dbReference type="PRO" id="PR:Q96G91"/>
<dbReference type="Proteomes" id="UP000005640">
    <property type="component" value="Chromosome 19"/>
</dbReference>
<dbReference type="RNAct" id="Q96G91">
    <property type="molecule type" value="protein"/>
</dbReference>
<dbReference type="Bgee" id="ENSG00000244165">
    <property type="expression patterns" value="Expressed in granulocyte and 95 other cell types or tissues"/>
</dbReference>
<dbReference type="GO" id="GO:0005886">
    <property type="term" value="C:plasma membrane"/>
    <property type="evidence" value="ECO:0000318"/>
    <property type="project" value="GO_Central"/>
</dbReference>
<dbReference type="GO" id="GO:0045031">
    <property type="term" value="F:G protein-coupled ATP receptor activity"/>
    <property type="evidence" value="ECO:0000314"/>
    <property type="project" value="BHF-UCL"/>
</dbReference>
<dbReference type="GO" id="GO:0030594">
    <property type="term" value="F:neurotransmitter receptor activity"/>
    <property type="evidence" value="ECO:0000314"/>
    <property type="project" value="BHF-UCL"/>
</dbReference>
<dbReference type="GO" id="GO:0038023">
    <property type="term" value="F:signaling receptor activity"/>
    <property type="evidence" value="ECO:0000304"/>
    <property type="project" value="ProtInc"/>
</dbReference>
<dbReference type="GO" id="GO:0007190">
    <property type="term" value="P:activation of adenylate cyclase activity"/>
    <property type="evidence" value="ECO:0000304"/>
    <property type="project" value="ProtInc"/>
</dbReference>
<dbReference type="GO" id="GO:0019722">
    <property type="term" value="P:calcium-mediated signaling"/>
    <property type="evidence" value="ECO:0000314"/>
    <property type="project" value="BHF-UCL"/>
</dbReference>
<dbReference type="GO" id="GO:0071318">
    <property type="term" value="P:cellular response to ATP"/>
    <property type="evidence" value="ECO:0000314"/>
    <property type="project" value="BHF-UCL"/>
</dbReference>
<dbReference type="GO" id="GO:0006952">
    <property type="term" value="P:defense response"/>
    <property type="evidence" value="ECO:0000304"/>
    <property type="project" value="ProtInc"/>
</dbReference>
<dbReference type="GO" id="GO:0007186">
    <property type="term" value="P:G protein-coupled receptor signaling pathway"/>
    <property type="evidence" value="ECO:0000314"/>
    <property type="project" value="BHF-UCL"/>
</dbReference>
<dbReference type="GO" id="GO:0023041">
    <property type="term" value="P:neuronal signal transduction"/>
    <property type="evidence" value="ECO:0000314"/>
    <property type="project" value="BHF-UCL"/>
</dbReference>
<dbReference type="GO" id="GO:0007200">
    <property type="term" value="P:phospholipase C-activating G protein-coupled receptor signaling pathway"/>
    <property type="evidence" value="ECO:0000304"/>
    <property type="project" value="ProtInc"/>
</dbReference>
<dbReference type="CDD" id="cd15376">
    <property type="entry name" value="7tmA_P2Y11"/>
    <property type="match status" value="1"/>
</dbReference>
<dbReference type="FunFam" id="1.20.1070.10:FF:000283">
    <property type="entry name" value="Purinergic receptor P2Y11"/>
    <property type="match status" value="1"/>
</dbReference>
<dbReference type="Gene3D" id="1.20.1070.10">
    <property type="entry name" value="Rhodopsin 7-helix transmembrane proteins"/>
    <property type="match status" value="1"/>
</dbReference>
<dbReference type="InterPro" id="IPR000276">
    <property type="entry name" value="GPCR_Rhodpsn"/>
</dbReference>
<dbReference type="InterPro" id="IPR017452">
    <property type="entry name" value="GPCR_Rhodpsn_7TM"/>
</dbReference>
<dbReference type="InterPro" id="IPR027677">
    <property type="entry name" value="P2Y11_rcpt"/>
</dbReference>
<dbReference type="PANTHER" id="PTHR24231:SF46">
    <property type="entry name" value="P2Y PURINOCEPTOR 11"/>
    <property type="match status" value="1"/>
</dbReference>
<dbReference type="PANTHER" id="PTHR24231">
    <property type="entry name" value="PURINOCEPTOR-RELATED G-PROTEIN COUPLED RECEPTOR"/>
    <property type="match status" value="1"/>
</dbReference>
<dbReference type="Pfam" id="PF00001">
    <property type="entry name" value="7tm_1"/>
    <property type="match status" value="1"/>
</dbReference>
<dbReference type="PRINTS" id="PR00237">
    <property type="entry name" value="GPCRRHODOPSN"/>
</dbReference>
<dbReference type="PRINTS" id="PR01157">
    <property type="entry name" value="P2YPURNOCPTR"/>
</dbReference>
<dbReference type="SUPFAM" id="SSF81321">
    <property type="entry name" value="Family A G protein-coupled receptor-like"/>
    <property type="match status" value="1"/>
</dbReference>
<dbReference type="PROSITE" id="PS00237">
    <property type="entry name" value="G_PROTEIN_RECEP_F1_1"/>
    <property type="match status" value="1"/>
</dbReference>
<dbReference type="PROSITE" id="PS50262">
    <property type="entry name" value="G_PROTEIN_RECEP_F1_2"/>
    <property type="match status" value="1"/>
</dbReference>
<protein>
    <recommendedName>
        <fullName>P2Y purinoceptor 11</fullName>
        <shortName>P2Y11</shortName>
    </recommendedName>
</protein>
<name>P2Y11_HUMAN</name>
<keyword id="KW-1003">Cell membrane</keyword>
<keyword id="KW-1015">Disulfide bond</keyword>
<keyword id="KW-0297">G-protein coupled receptor</keyword>
<keyword id="KW-0325">Glycoprotein</keyword>
<keyword id="KW-0472">Membrane</keyword>
<keyword id="KW-1267">Proteomics identification</keyword>
<keyword id="KW-0675">Receptor</keyword>
<keyword id="KW-1185">Reference proteome</keyword>
<keyword id="KW-0807">Transducer</keyword>
<keyword id="KW-0812">Transmembrane</keyword>
<keyword id="KW-1133">Transmembrane helix</keyword>
<reference key="1">
    <citation type="journal article" date="2001" name="J. Biol. Chem.">
        <title>Cotranscription and intergenic splicing of human P2Y11 and SSF1 genes.</title>
        <authorList>
            <person name="Communi D."/>
            <person name="Suarez-Huerta N."/>
            <person name="Dussossoy D."/>
            <person name="Savi P."/>
            <person name="Boeynaems J.-M."/>
        </authorList>
    </citation>
    <scope>NUCLEOTIDE SEQUENCE [MRNA]</scope>
    <scope>TISSUE SPECIFICITY</scope>
    <scope>TRANS-SPLICING</scope>
    <source>
        <tissue>Placenta</tissue>
        <tissue>Promyelocyte</tissue>
    </source>
</reference>
<reference key="2">
    <citation type="submission" date="2003-10" db="EMBL/GenBank/DDBJ databases">
        <title>Isolation of cDNA coding for purinergic receptor P2Y, G protein-coupled, 11 (P2RY11).</title>
        <authorList>
            <person name="King M.M."/>
            <person name="Aronstam R.S."/>
            <person name="Sharma S.V."/>
        </authorList>
    </citation>
    <scope>NUCLEOTIDE SEQUENCE [MRNA]</scope>
    <source>
        <tissue>Placenta</tissue>
    </source>
</reference>
<reference key="3">
    <citation type="journal article" date="2004" name="Nat. Genet.">
        <title>Complete sequencing and characterization of 21,243 full-length human cDNAs.</title>
        <authorList>
            <person name="Ota T."/>
            <person name="Suzuki Y."/>
            <person name="Nishikawa T."/>
            <person name="Otsuki T."/>
            <person name="Sugiyama T."/>
            <person name="Irie R."/>
            <person name="Wakamatsu A."/>
            <person name="Hayashi K."/>
            <person name="Sato H."/>
            <person name="Nagai K."/>
            <person name="Kimura K."/>
            <person name="Makita H."/>
            <person name="Sekine M."/>
            <person name="Obayashi M."/>
            <person name="Nishi T."/>
            <person name="Shibahara T."/>
            <person name="Tanaka T."/>
            <person name="Ishii S."/>
            <person name="Yamamoto J."/>
            <person name="Saito K."/>
            <person name="Kawai Y."/>
            <person name="Isono Y."/>
            <person name="Nakamura Y."/>
            <person name="Nagahari K."/>
            <person name="Murakami K."/>
            <person name="Yasuda T."/>
            <person name="Iwayanagi T."/>
            <person name="Wagatsuma M."/>
            <person name="Shiratori A."/>
            <person name="Sudo H."/>
            <person name="Hosoiri T."/>
            <person name="Kaku Y."/>
            <person name="Kodaira H."/>
            <person name="Kondo H."/>
            <person name="Sugawara M."/>
            <person name="Takahashi M."/>
            <person name="Kanda K."/>
            <person name="Yokoi T."/>
            <person name="Furuya T."/>
            <person name="Kikkawa E."/>
            <person name="Omura Y."/>
            <person name="Abe K."/>
            <person name="Kamihara K."/>
            <person name="Katsuta N."/>
            <person name="Sato K."/>
            <person name="Tanikawa M."/>
            <person name="Yamazaki M."/>
            <person name="Ninomiya K."/>
            <person name="Ishibashi T."/>
            <person name="Yamashita H."/>
            <person name="Murakawa K."/>
            <person name="Fujimori K."/>
            <person name="Tanai H."/>
            <person name="Kimata M."/>
            <person name="Watanabe M."/>
            <person name="Hiraoka S."/>
            <person name="Chiba Y."/>
            <person name="Ishida S."/>
            <person name="Ono Y."/>
            <person name="Takiguchi S."/>
            <person name="Watanabe S."/>
            <person name="Yosida M."/>
            <person name="Hotuta T."/>
            <person name="Kusano J."/>
            <person name="Kanehori K."/>
            <person name="Takahashi-Fujii A."/>
            <person name="Hara H."/>
            <person name="Tanase T.-O."/>
            <person name="Nomura Y."/>
            <person name="Togiya S."/>
            <person name="Komai F."/>
            <person name="Hara R."/>
            <person name="Takeuchi K."/>
            <person name="Arita M."/>
            <person name="Imose N."/>
            <person name="Musashino K."/>
            <person name="Yuuki H."/>
            <person name="Oshima A."/>
            <person name="Sasaki N."/>
            <person name="Aotsuka S."/>
            <person name="Yoshikawa Y."/>
            <person name="Matsunawa H."/>
            <person name="Ichihara T."/>
            <person name="Shiohata N."/>
            <person name="Sano S."/>
            <person name="Moriya S."/>
            <person name="Momiyama H."/>
            <person name="Satoh N."/>
            <person name="Takami S."/>
            <person name="Terashima Y."/>
            <person name="Suzuki O."/>
            <person name="Nakagawa S."/>
            <person name="Senoh A."/>
            <person name="Mizoguchi H."/>
            <person name="Goto Y."/>
            <person name="Shimizu F."/>
            <person name="Wakebe H."/>
            <person name="Hishigaki H."/>
            <person name="Watanabe T."/>
            <person name="Sugiyama A."/>
            <person name="Takemoto M."/>
            <person name="Kawakami B."/>
            <person name="Yamazaki M."/>
            <person name="Watanabe K."/>
            <person name="Kumagai A."/>
            <person name="Itakura S."/>
            <person name="Fukuzumi Y."/>
            <person name="Fujimori Y."/>
            <person name="Komiyama M."/>
            <person name="Tashiro H."/>
            <person name="Tanigami A."/>
            <person name="Fujiwara T."/>
            <person name="Ono T."/>
            <person name="Yamada K."/>
            <person name="Fujii Y."/>
            <person name="Ozaki K."/>
            <person name="Hirao M."/>
            <person name="Ohmori Y."/>
            <person name="Kawabata A."/>
            <person name="Hikiji T."/>
            <person name="Kobatake N."/>
            <person name="Inagaki H."/>
            <person name="Ikema Y."/>
            <person name="Okamoto S."/>
            <person name="Okitani R."/>
            <person name="Kawakami T."/>
            <person name="Noguchi S."/>
            <person name="Itoh T."/>
            <person name="Shigeta K."/>
            <person name="Senba T."/>
            <person name="Matsumura K."/>
            <person name="Nakajima Y."/>
            <person name="Mizuno T."/>
            <person name="Morinaga M."/>
            <person name="Sasaki M."/>
            <person name="Togashi T."/>
            <person name="Oyama M."/>
            <person name="Hata H."/>
            <person name="Watanabe M."/>
            <person name="Komatsu T."/>
            <person name="Mizushima-Sugano J."/>
            <person name="Satoh T."/>
            <person name="Shirai Y."/>
            <person name="Takahashi Y."/>
            <person name="Nakagawa K."/>
            <person name="Okumura K."/>
            <person name="Nagase T."/>
            <person name="Nomura N."/>
            <person name="Kikuchi H."/>
            <person name="Masuho Y."/>
            <person name="Yamashita R."/>
            <person name="Nakai K."/>
            <person name="Yada T."/>
            <person name="Nakamura Y."/>
            <person name="Ohara O."/>
            <person name="Isogai T."/>
            <person name="Sugano S."/>
        </authorList>
    </citation>
    <scope>NUCLEOTIDE SEQUENCE [LARGE SCALE MRNA]</scope>
</reference>
<reference key="4">
    <citation type="submission" date="2005-07" db="EMBL/GenBank/DDBJ databases">
        <authorList>
            <person name="Mural R.J."/>
            <person name="Istrail S."/>
            <person name="Sutton G.G."/>
            <person name="Florea L."/>
            <person name="Halpern A.L."/>
            <person name="Mobarry C.M."/>
            <person name="Lippert R."/>
            <person name="Walenz B."/>
            <person name="Shatkay H."/>
            <person name="Dew I."/>
            <person name="Miller J.R."/>
            <person name="Flanigan M.J."/>
            <person name="Edwards N.J."/>
            <person name="Bolanos R."/>
            <person name="Fasulo D."/>
            <person name="Halldorsson B.V."/>
            <person name="Hannenhalli S."/>
            <person name="Turner R."/>
            <person name="Yooseph S."/>
            <person name="Lu F."/>
            <person name="Nusskern D.R."/>
            <person name="Shue B.C."/>
            <person name="Zheng X.H."/>
            <person name="Zhong F."/>
            <person name="Delcher A.L."/>
            <person name="Huson D.H."/>
            <person name="Kravitz S.A."/>
            <person name="Mouchard L."/>
            <person name="Reinert K."/>
            <person name="Remington K.A."/>
            <person name="Clark A.G."/>
            <person name="Waterman M.S."/>
            <person name="Eichler E.E."/>
            <person name="Adams M.D."/>
            <person name="Hunkapiller M.W."/>
            <person name="Myers E.W."/>
            <person name="Venter J.C."/>
        </authorList>
    </citation>
    <scope>NUCLEOTIDE SEQUENCE [LARGE SCALE GENOMIC DNA]</scope>
</reference>
<reference key="5">
    <citation type="journal article" date="2004" name="Genome Res.">
        <title>The status, quality, and expansion of the NIH full-length cDNA project: the Mammalian Gene Collection (MGC).</title>
        <authorList>
            <consortium name="The MGC Project Team"/>
        </authorList>
    </citation>
    <scope>NUCLEOTIDE SEQUENCE [LARGE SCALE MRNA]</scope>
    <source>
        <tissue>Brain</tissue>
    </source>
</reference>
<reference key="6">
    <citation type="journal article" date="1997" name="J. Biol. Chem.">
        <title>Cloning of a human purinergic P2Y receptor coupled to phospholipase C and adenylyl cyclase.</title>
        <authorList>
            <person name="Communi D."/>
            <person name="Govaerts C."/>
            <person name="Parmentier M."/>
            <person name="Boeynaems J.-M."/>
        </authorList>
    </citation>
    <scope>NUCLEOTIDE SEQUENCE [MRNA] OF 7-374</scope>
    <source>
        <tissue>Placenta</tissue>
    </source>
</reference>
<reference key="7">
    <citation type="submission" date="2002-04" db="EMBL/GenBank/DDBJ databases">
        <title>cDNA clones of human proteins involved in signal transduction sequenced by the Guthrie cDNA resource center (www.cdna.org).</title>
        <authorList>
            <person name="Puhl H.L. III"/>
            <person name="Ikeda S.R."/>
            <person name="Aronstam R.S."/>
        </authorList>
    </citation>
    <scope>NUCLEOTIDE SEQUENCE [LARGE SCALE MRNA] OF 162-374</scope>
</reference>
<proteinExistence type="evidence at protein level"/>